<reference key="1">
    <citation type="journal article" date="2004" name="Proc. Natl. Acad. Sci. U.S.A.">
        <title>Complete genomes of two clinical Staphylococcus aureus strains: evidence for the rapid evolution of virulence and drug resistance.</title>
        <authorList>
            <person name="Holden M.T.G."/>
            <person name="Feil E.J."/>
            <person name="Lindsay J.A."/>
            <person name="Peacock S.J."/>
            <person name="Day N.P.J."/>
            <person name="Enright M.C."/>
            <person name="Foster T.J."/>
            <person name="Moore C.E."/>
            <person name="Hurst L."/>
            <person name="Atkin R."/>
            <person name="Barron A."/>
            <person name="Bason N."/>
            <person name="Bentley S.D."/>
            <person name="Chillingworth C."/>
            <person name="Chillingworth T."/>
            <person name="Churcher C."/>
            <person name="Clark L."/>
            <person name="Corton C."/>
            <person name="Cronin A."/>
            <person name="Doggett J."/>
            <person name="Dowd L."/>
            <person name="Feltwell T."/>
            <person name="Hance Z."/>
            <person name="Harris B."/>
            <person name="Hauser H."/>
            <person name="Holroyd S."/>
            <person name="Jagels K."/>
            <person name="James K.D."/>
            <person name="Lennard N."/>
            <person name="Line A."/>
            <person name="Mayes R."/>
            <person name="Moule S."/>
            <person name="Mungall K."/>
            <person name="Ormond D."/>
            <person name="Quail M.A."/>
            <person name="Rabbinowitsch E."/>
            <person name="Rutherford K.M."/>
            <person name="Sanders M."/>
            <person name="Sharp S."/>
            <person name="Simmonds M."/>
            <person name="Stevens K."/>
            <person name="Whitehead S."/>
            <person name="Barrell B.G."/>
            <person name="Spratt B.G."/>
            <person name="Parkhill J."/>
        </authorList>
    </citation>
    <scope>NUCLEOTIDE SEQUENCE [LARGE SCALE GENOMIC DNA]</scope>
    <source>
        <strain>MRSA252</strain>
    </source>
</reference>
<keyword id="KW-0067">ATP-binding</keyword>
<keyword id="KW-0963">Cytoplasm</keyword>
<keyword id="KW-0418">Kinase</keyword>
<keyword id="KW-0520">NAD</keyword>
<keyword id="KW-0521">NADP</keyword>
<keyword id="KW-0547">Nucleotide-binding</keyword>
<keyword id="KW-0808">Transferase</keyword>
<name>NADK_STAAR</name>
<protein>
    <recommendedName>
        <fullName evidence="1">NAD kinase</fullName>
        <ecNumber evidence="1">2.7.1.23</ecNumber>
    </recommendedName>
    <alternativeName>
        <fullName evidence="1">ATP-dependent NAD kinase</fullName>
    </alternativeName>
</protein>
<dbReference type="EC" id="2.7.1.23" evidence="1"/>
<dbReference type="EMBL" id="BX571856">
    <property type="protein sequence ID" value="CAG39979.1"/>
    <property type="molecule type" value="Genomic_DNA"/>
</dbReference>
<dbReference type="RefSeq" id="WP_001270834.1">
    <property type="nucleotide sequence ID" value="NC_002952.2"/>
</dbReference>
<dbReference type="SMR" id="Q6GI79"/>
<dbReference type="KEGG" id="sar:SAR0974"/>
<dbReference type="HOGENOM" id="CLU_008831_0_3_9"/>
<dbReference type="Proteomes" id="UP000000596">
    <property type="component" value="Chromosome"/>
</dbReference>
<dbReference type="GO" id="GO:0005737">
    <property type="term" value="C:cytoplasm"/>
    <property type="evidence" value="ECO:0007669"/>
    <property type="project" value="UniProtKB-SubCell"/>
</dbReference>
<dbReference type="GO" id="GO:0005524">
    <property type="term" value="F:ATP binding"/>
    <property type="evidence" value="ECO:0007669"/>
    <property type="project" value="UniProtKB-KW"/>
</dbReference>
<dbReference type="GO" id="GO:0046872">
    <property type="term" value="F:metal ion binding"/>
    <property type="evidence" value="ECO:0007669"/>
    <property type="project" value="UniProtKB-UniRule"/>
</dbReference>
<dbReference type="GO" id="GO:0051287">
    <property type="term" value="F:NAD binding"/>
    <property type="evidence" value="ECO:0007669"/>
    <property type="project" value="UniProtKB-ARBA"/>
</dbReference>
<dbReference type="GO" id="GO:0003951">
    <property type="term" value="F:NAD+ kinase activity"/>
    <property type="evidence" value="ECO:0007669"/>
    <property type="project" value="UniProtKB-UniRule"/>
</dbReference>
<dbReference type="GO" id="GO:0019674">
    <property type="term" value="P:NAD metabolic process"/>
    <property type="evidence" value="ECO:0007669"/>
    <property type="project" value="InterPro"/>
</dbReference>
<dbReference type="GO" id="GO:0006741">
    <property type="term" value="P:NADP biosynthetic process"/>
    <property type="evidence" value="ECO:0007669"/>
    <property type="project" value="UniProtKB-UniRule"/>
</dbReference>
<dbReference type="FunFam" id="2.60.200.30:FF:000002">
    <property type="entry name" value="NAD kinase"/>
    <property type="match status" value="1"/>
</dbReference>
<dbReference type="Gene3D" id="3.40.50.10330">
    <property type="entry name" value="Probable inorganic polyphosphate/atp-NAD kinase, domain 1"/>
    <property type="match status" value="1"/>
</dbReference>
<dbReference type="Gene3D" id="2.60.200.30">
    <property type="entry name" value="Probable inorganic polyphosphate/atp-NAD kinase, domain 2"/>
    <property type="match status" value="1"/>
</dbReference>
<dbReference type="HAMAP" id="MF_00361">
    <property type="entry name" value="NAD_kinase"/>
    <property type="match status" value="1"/>
</dbReference>
<dbReference type="InterPro" id="IPR017438">
    <property type="entry name" value="ATP-NAD_kinase_N"/>
</dbReference>
<dbReference type="InterPro" id="IPR017437">
    <property type="entry name" value="ATP-NAD_kinase_PpnK-typ_C"/>
</dbReference>
<dbReference type="InterPro" id="IPR016064">
    <property type="entry name" value="NAD/diacylglycerol_kinase_sf"/>
</dbReference>
<dbReference type="InterPro" id="IPR002504">
    <property type="entry name" value="NADK"/>
</dbReference>
<dbReference type="NCBIfam" id="NF003424">
    <property type="entry name" value="PRK04885.1"/>
    <property type="match status" value="1"/>
</dbReference>
<dbReference type="PANTHER" id="PTHR20275">
    <property type="entry name" value="NAD KINASE"/>
    <property type="match status" value="1"/>
</dbReference>
<dbReference type="PANTHER" id="PTHR20275:SF0">
    <property type="entry name" value="NAD KINASE"/>
    <property type="match status" value="1"/>
</dbReference>
<dbReference type="Pfam" id="PF01513">
    <property type="entry name" value="NAD_kinase"/>
    <property type="match status" value="1"/>
</dbReference>
<dbReference type="Pfam" id="PF20143">
    <property type="entry name" value="NAD_kinase_C"/>
    <property type="match status" value="1"/>
</dbReference>
<dbReference type="SUPFAM" id="SSF111331">
    <property type="entry name" value="NAD kinase/diacylglycerol kinase-like"/>
    <property type="match status" value="1"/>
</dbReference>
<accession>Q6GI79</accession>
<evidence type="ECO:0000255" key="1">
    <source>
        <dbReference type="HAMAP-Rule" id="MF_00361"/>
    </source>
</evidence>
<sequence>MRYTILTKGDSKSNALKHKMMNYMKDFRMIEDSENPEIVISVGGDGTLLQAFHQYSHMLSKVAFVGVHTGHLGFYADWLPHEVEKLIIEINNSEFQVIEYPLLEIIMRYNDNGYETRYLALNEATMKTENGSTLVVDVNLRGKHFERFRGDGLCVSTPSGSTAYNKALGGALIHPSLEAMQITEIASINNRVFRTVGSPLVLPKHHTCLISPVNHDTIRMTIDHVSIKHKNVNSIQYRVANEKVRFARFRPFPFWKRVHDSFISSDEER</sequence>
<comment type="function">
    <text evidence="1">Involved in the regulation of the intracellular balance of NAD and NADP, and is a key enzyme in the biosynthesis of NADP. Catalyzes specifically the phosphorylation on 2'-hydroxyl of the adenosine moiety of NAD to yield NADP.</text>
</comment>
<comment type="catalytic activity">
    <reaction evidence="1">
        <text>NAD(+) + ATP = ADP + NADP(+) + H(+)</text>
        <dbReference type="Rhea" id="RHEA:18629"/>
        <dbReference type="ChEBI" id="CHEBI:15378"/>
        <dbReference type="ChEBI" id="CHEBI:30616"/>
        <dbReference type="ChEBI" id="CHEBI:57540"/>
        <dbReference type="ChEBI" id="CHEBI:58349"/>
        <dbReference type="ChEBI" id="CHEBI:456216"/>
        <dbReference type="EC" id="2.7.1.23"/>
    </reaction>
</comment>
<comment type="cofactor">
    <cofactor evidence="1">
        <name>a divalent metal cation</name>
        <dbReference type="ChEBI" id="CHEBI:60240"/>
    </cofactor>
</comment>
<comment type="subcellular location">
    <subcellularLocation>
        <location evidence="1">Cytoplasm</location>
    </subcellularLocation>
</comment>
<comment type="similarity">
    <text evidence="1">Belongs to the NAD kinase family.</text>
</comment>
<feature type="chain" id="PRO_0000120661" description="NAD kinase">
    <location>
        <begin position="1"/>
        <end position="269"/>
    </location>
</feature>
<feature type="active site" description="Proton acceptor" evidence="1">
    <location>
        <position position="45"/>
    </location>
</feature>
<feature type="binding site" evidence="1">
    <location>
        <begin position="45"/>
        <end position="46"/>
    </location>
    <ligand>
        <name>NAD(+)</name>
        <dbReference type="ChEBI" id="CHEBI:57540"/>
    </ligand>
</feature>
<feature type="binding site" evidence="1">
    <location>
        <begin position="122"/>
        <end position="123"/>
    </location>
    <ligand>
        <name>NAD(+)</name>
        <dbReference type="ChEBI" id="CHEBI:57540"/>
    </ligand>
</feature>
<feature type="binding site" evidence="1">
    <location>
        <position position="149"/>
    </location>
    <ligand>
        <name>NAD(+)</name>
        <dbReference type="ChEBI" id="CHEBI:57540"/>
    </ligand>
</feature>
<feature type="binding site" evidence="1">
    <location>
        <position position="151"/>
    </location>
    <ligand>
        <name>NAD(+)</name>
        <dbReference type="ChEBI" id="CHEBI:57540"/>
    </ligand>
</feature>
<feature type="binding site" evidence="1">
    <location>
        <position position="186"/>
    </location>
    <ligand>
        <name>NAD(+)</name>
        <dbReference type="ChEBI" id="CHEBI:57540"/>
    </ligand>
</feature>
<gene>
    <name evidence="1" type="primary">nadK</name>
    <name type="ordered locus">SAR0974</name>
</gene>
<proteinExistence type="inferred from homology"/>
<organism>
    <name type="scientific">Staphylococcus aureus (strain MRSA252)</name>
    <dbReference type="NCBI Taxonomy" id="282458"/>
    <lineage>
        <taxon>Bacteria</taxon>
        <taxon>Bacillati</taxon>
        <taxon>Bacillota</taxon>
        <taxon>Bacilli</taxon>
        <taxon>Bacillales</taxon>
        <taxon>Staphylococcaceae</taxon>
        <taxon>Staphylococcus</taxon>
    </lineage>
</organism>